<keyword id="KW-0067">ATP-binding</keyword>
<keyword id="KW-0378">Hydrolase</keyword>
<keyword id="KW-0460">Magnesium</keyword>
<keyword id="KW-0479">Metal-binding</keyword>
<keyword id="KW-0511">Multifunctional enzyme</keyword>
<keyword id="KW-0533">Nickel</keyword>
<keyword id="KW-0547">Nucleotide-binding</keyword>
<keyword id="KW-0548">Nucleotidyltransferase</keyword>
<keyword id="KW-0692">RNA repair</keyword>
<keyword id="KW-0694">RNA-binding</keyword>
<keyword id="KW-0808">Transferase</keyword>
<keyword id="KW-0819">tRNA processing</keyword>
<organism>
    <name type="scientific">Neisseria meningitidis serogroup A / serotype 4A (strain DSM 15465 / Z2491)</name>
    <dbReference type="NCBI Taxonomy" id="122587"/>
    <lineage>
        <taxon>Bacteria</taxon>
        <taxon>Pseudomonadati</taxon>
        <taxon>Pseudomonadota</taxon>
        <taxon>Betaproteobacteria</taxon>
        <taxon>Neisseriales</taxon>
        <taxon>Neisseriaceae</taxon>
        <taxon>Neisseria</taxon>
    </lineage>
</organism>
<reference key="1">
    <citation type="journal article" date="2000" name="Nature">
        <title>Complete DNA sequence of a serogroup A strain of Neisseria meningitidis Z2491.</title>
        <authorList>
            <person name="Parkhill J."/>
            <person name="Achtman M."/>
            <person name="James K.D."/>
            <person name="Bentley S.D."/>
            <person name="Churcher C.M."/>
            <person name="Klee S.R."/>
            <person name="Morelli G."/>
            <person name="Basham D."/>
            <person name="Brown D."/>
            <person name="Chillingworth T."/>
            <person name="Davies R.M."/>
            <person name="Davis P."/>
            <person name="Devlin K."/>
            <person name="Feltwell T."/>
            <person name="Hamlin N."/>
            <person name="Holroyd S."/>
            <person name="Jagels K."/>
            <person name="Leather S."/>
            <person name="Moule S."/>
            <person name="Mungall K.L."/>
            <person name="Quail M.A."/>
            <person name="Rajandream M.A."/>
            <person name="Rutherford K.M."/>
            <person name="Simmonds M."/>
            <person name="Skelton J."/>
            <person name="Whitehead S."/>
            <person name="Spratt B.G."/>
            <person name="Barrell B.G."/>
        </authorList>
    </citation>
    <scope>NUCLEOTIDE SEQUENCE [LARGE SCALE GENOMIC DNA]</scope>
    <source>
        <strain>DSM 15465 / Z2491</strain>
    </source>
</reference>
<feature type="chain" id="PRO_0000138987" description="Multifunctional CCA protein">
    <location>
        <begin position="1"/>
        <end position="417"/>
    </location>
</feature>
<feature type="domain" description="HD" evidence="1">
    <location>
        <begin position="225"/>
        <end position="326"/>
    </location>
</feature>
<feature type="binding site" evidence="1">
    <location>
        <position position="8"/>
    </location>
    <ligand>
        <name>ATP</name>
        <dbReference type="ChEBI" id="CHEBI:30616"/>
    </ligand>
</feature>
<feature type="binding site" evidence="1">
    <location>
        <position position="8"/>
    </location>
    <ligand>
        <name>CTP</name>
        <dbReference type="ChEBI" id="CHEBI:37563"/>
    </ligand>
</feature>
<feature type="binding site" evidence="1">
    <location>
        <position position="11"/>
    </location>
    <ligand>
        <name>ATP</name>
        <dbReference type="ChEBI" id="CHEBI:30616"/>
    </ligand>
</feature>
<feature type="binding site" evidence="1">
    <location>
        <position position="11"/>
    </location>
    <ligand>
        <name>CTP</name>
        <dbReference type="ChEBI" id="CHEBI:37563"/>
    </ligand>
</feature>
<feature type="binding site" evidence="1">
    <location>
        <position position="21"/>
    </location>
    <ligand>
        <name>Mg(2+)</name>
        <dbReference type="ChEBI" id="CHEBI:18420"/>
    </ligand>
</feature>
<feature type="binding site" evidence="1">
    <location>
        <position position="23"/>
    </location>
    <ligand>
        <name>Mg(2+)</name>
        <dbReference type="ChEBI" id="CHEBI:18420"/>
    </ligand>
</feature>
<feature type="binding site" evidence="1">
    <location>
        <position position="91"/>
    </location>
    <ligand>
        <name>ATP</name>
        <dbReference type="ChEBI" id="CHEBI:30616"/>
    </ligand>
</feature>
<feature type="binding site" evidence="1">
    <location>
        <position position="91"/>
    </location>
    <ligand>
        <name>CTP</name>
        <dbReference type="ChEBI" id="CHEBI:37563"/>
    </ligand>
</feature>
<feature type="binding site" evidence="1">
    <location>
        <position position="137"/>
    </location>
    <ligand>
        <name>ATP</name>
        <dbReference type="ChEBI" id="CHEBI:30616"/>
    </ligand>
</feature>
<feature type="binding site" evidence="1">
    <location>
        <position position="137"/>
    </location>
    <ligand>
        <name>CTP</name>
        <dbReference type="ChEBI" id="CHEBI:37563"/>
    </ligand>
</feature>
<feature type="binding site" evidence="1">
    <location>
        <position position="140"/>
    </location>
    <ligand>
        <name>ATP</name>
        <dbReference type="ChEBI" id="CHEBI:30616"/>
    </ligand>
</feature>
<feature type="binding site" evidence="1">
    <location>
        <position position="140"/>
    </location>
    <ligand>
        <name>CTP</name>
        <dbReference type="ChEBI" id="CHEBI:37563"/>
    </ligand>
</feature>
<name>CCA_NEIMA</name>
<gene>
    <name evidence="1" type="primary">cca</name>
    <name type="ordered locus">NMA1410</name>
</gene>
<evidence type="ECO:0000255" key="1">
    <source>
        <dbReference type="HAMAP-Rule" id="MF_01261"/>
    </source>
</evidence>
<proteinExistence type="inferred from homology"/>
<protein>
    <recommendedName>
        <fullName evidence="1">Multifunctional CCA protein</fullName>
    </recommendedName>
    <domain>
        <recommendedName>
            <fullName evidence="1">CCA-adding enzyme</fullName>
            <ecNumber evidence="1">2.7.7.72</ecNumber>
        </recommendedName>
        <alternativeName>
            <fullName evidence="1">CCA tRNA nucleotidyltransferase</fullName>
        </alternativeName>
        <alternativeName>
            <fullName evidence="1">tRNA CCA-pyrophosphorylase</fullName>
        </alternativeName>
        <alternativeName>
            <fullName evidence="1">tRNA adenylyl-/cytidylyl-transferase</fullName>
        </alternativeName>
        <alternativeName>
            <fullName evidence="1">tRNA nucleotidyltransferase</fullName>
        </alternativeName>
        <alternativeName>
            <fullName evidence="1">tRNA-NT</fullName>
        </alternativeName>
    </domain>
    <domain>
        <recommendedName>
            <fullName evidence="1">2'-nucleotidase</fullName>
            <ecNumber evidence="1">3.1.3.-</ecNumber>
        </recommendedName>
    </domain>
    <domain>
        <recommendedName>
            <fullName evidence="1">2',3'-cyclic phosphodiesterase</fullName>
            <ecNumber evidence="1">3.1.4.-</ecNumber>
        </recommendedName>
    </domain>
    <domain>
        <recommendedName>
            <fullName evidence="1">Phosphatase</fullName>
            <ecNumber evidence="1">3.1.3.-</ecNumber>
        </recommendedName>
    </domain>
</protein>
<dbReference type="EC" id="2.7.7.72" evidence="1"/>
<dbReference type="EC" id="3.1.3.-" evidence="1"/>
<dbReference type="EC" id="3.1.4.-" evidence="1"/>
<dbReference type="EMBL" id="AL157959">
    <property type="protein sequence ID" value="CAM08576.1"/>
    <property type="molecule type" value="Genomic_DNA"/>
</dbReference>
<dbReference type="PIR" id="C81910">
    <property type="entry name" value="C81910"/>
</dbReference>
<dbReference type="RefSeq" id="WP_002232488.1">
    <property type="nucleotide sequence ID" value="NC_003116.1"/>
</dbReference>
<dbReference type="SMR" id="Q9JUB2"/>
<dbReference type="EnsemblBacteria" id="CAM08576">
    <property type="protein sequence ID" value="CAM08576"/>
    <property type="gene ID" value="NMA1410"/>
</dbReference>
<dbReference type="KEGG" id="nma:NMA1410"/>
<dbReference type="HOGENOM" id="CLU_015961_1_1_4"/>
<dbReference type="Proteomes" id="UP000000626">
    <property type="component" value="Chromosome"/>
</dbReference>
<dbReference type="GO" id="GO:0005524">
    <property type="term" value="F:ATP binding"/>
    <property type="evidence" value="ECO:0007669"/>
    <property type="project" value="UniProtKB-UniRule"/>
</dbReference>
<dbReference type="GO" id="GO:0004810">
    <property type="term" value="F:CCA tRNA nucleotidyltransferase activity"/>
    <property type="evidence" value="ECO:0007669"/>
    <property type="project" value="UniProtKB-UniRule"/>
</dbReference>
<dbReference type="GO" id="GO:0004112">
    <property type="term" value="F:cyclic-nucleotide phosphodiesterase activity"/>
    <property type="evidence" value="ECO:0007669"/>
    <property type="project" value="UniProtKB-UniRule"/>
</dbReference>
<dbReference type="GO" id="GO:0000287">
    <property type="term" value="F:magnesium ion binding"/>
    <property type="evidence" value="ECO:0007669"/>
    <property type="project" value="UniProtKB-UniRule"/>
</dbReference>
<dbReference type="GO" id="GO:0016791">
    <property type="term" value="F:phosphatase activity"/>
    <property type="evidence" value="ECO:0007669"/>
    <property type="project" value="UniProtKB-UniRule"/>
</dbReference>
<dbReference type="GO" id="GO:0000049">
    <property type="term" value="F:tRNA binding"/>
    <property type="evidence" value="ECO:0007669"/>
    <property type="project" value="UniProtKB-UniRule"/>
</dbReference>
<dbReference type="GO" id="GO:0042245">
    <property type="term" value="P:RNA repair"/>
    <property type="evidence" value="ECO:0007669"/>
    <property type="project" value="UniProtKB-KW"/>
</dbReference>
<dbReference type="GO" id="GO:0001680">
    <property type="term" value="P:tRNA 3'-terminal CCA addition"/>
    <property type="evidence" value="ECO:0007669"/>
    <property type="project" value="UniProtKB-UniRule"/>
</dbReference>
<dbReference type="CDD" id="cd00077">
    <property type="entry name" value="HDc"/>
    <property type="match status" value="1"/>
</dbReference>
<dbReference type="CDD" id="cd05398">
    <property type="entry name" value="NT_ClassII-CCAase"/>
    <property type="match status" value="1"/>
</dbReference>
<dbReference type="Gene3D" id="3.30.460.10">
    <property type="entry name" value="Beta Polymerase, domain 2"/>
    <property type="match status" value="1"/>
</dbReference>
<dbReference type="Gene3D" id="1.10.3090.10">
    <property type="entry name" value="cca-adding enzyme, domain 2"/>
    <property type="match status" value="1"/>
</dbReference>
<dbReference type="HAMAP" id="MF_01261">
    <property type="entry name" value="CCA_bact_type1"/>
    <property type="match status" value="1"/>
</dbReference>
<dbReference type="HAMAP" id="MF_01262">
    <property type="entry name" value="CCA_bact_type2"/>
    <property type="match status" value="1"/>
</dbReference>
<dbReference type="InterPro" id="IPR012006">
    <property type="entry name" value="CCA_bact"/>
</dbReference>
<dbReference type="InterPro" id="IPR003607">
    <property type="entry name" value="HD/PDEase_dom"/>
</dbReference>
<dbReference type="InterPro" id="IPR006674">
    <property type="entry name" value="HD_domain"/>
</dbReference>
<dbReference type="InterPro" id="IPR043519">
    <property type="entry name" value="NT_sf"/>
</dbReference>
<dbReference type="InterPro" id="IPR002646">
    <property type="entry name" value="PolA_pol_head_dom"/>
</dbReference>
<dbReference type="InterPro" id="IPR032828">
    <property type="entry name" value="PolyA_RNA-bd"/>
</dbReference>
<dbReference type="InterPro" id="IPR050124">
    <property type="entry name" value="tRNA_CCA-adding_enzyme"/>
</dbReference>
<dbReference type="NCBIfam" id="NF008137">
    <property type="entry name" value="PRK10885.1"/>
    <property type="match status" value="1"/>
</dbReference>
<dbReference type="PANTHER" id="PTHR47545">
    <property type="entry name" value="MULTIFUNCTIONAL CCA PROTEIN"/>
    <property type="match status" value="1"/>
</dbReference>
<dbReference type="PANTHER" id="PTHR47545:SF1">
    <property type="entry name" value="MULTIFUNCTIONAL CCA PROTEIN"/>
    <property type="match status" value="1"/>
</dbReference>
<dbReference type="Pfam" id="PF01966">
    <property type="entry name" value="HD"/>
    <property type="match status" value="1"/>
</dbReference>
<dbReference type="Pfam" id="PF01743">
    <property type="entry name" value="PolyA_pol"/>
    <property type="match status" value="1"/>
</dbReference>
<dbReference type="Pfam" id="PF12627">
    <property type="entry name" value="PolyA_pol_RNAbd"/>
    <property type="match status" value="1"/>
</dbReference>
<dbReference type="PIRSF" id="PIRSF000813">
    <property type="entry name" value="CCA_bact"/>
    <property type="match status" value="1"/>
</dbReference>
<dbReference type="SUPFAM" id="SSF81301">
    <property type="entry name" value="Nucleotidyltransferase"/>
    <property type="match status" value="1"/>
</dbReference>
<dbReference type="SUPFAM" id="SSF81891">
    <property type="entry name" value="Poly A polymerase C-terminal region-like"/>
    <property type="match status" value="1"/>
</dbReference>
<dbReference type="PROSITE" id="PS51831">
    <property type="entry name" value="HD"/>
    <property type="match status" value="1"/>
</dbReference>
<sequence length="417" mass="46890">MQTYLVGGAVRDYLLGLPVKDRDWVVVGADAQTMLAQGFQPVGKDFPVFLHPETHEEYALARTERKTAKGYVGFSFHADKDVTLEQDLMRRDLTINAMAQDADGKIIDPFGGQRDLAAGILRHVSPAFAEDPVRILRTARFAARYKFEIAEETIKLMRQMVENGEADALVAERVWQEFAKGLMEKNPRKMIEVLRECGALKVLLPEVNALFGVPQRADYHPEIDSGIHTLMTLQRAADMGLSLPERYAALLHDLGKAKTPSDILPRHHGHDLAGVEPVRKVNQRLRAPKHCAELAELVCRWHIIFHQVGQLKSQTILNVLKKTDAFRRPERFQTALNVCIADTQGRLNREHTPYPQRAHWLALLEAANQADSGKIAAECRSQGKAHLIAEQIDRARLAQIAPLQKAFRAAQDKTEKH</sequence>
<comment type="function">
    <text evidence="1">Catalyzes the addition and repair of the essential 3'-terminal CCA sequence in tRNAs without using a nucleic acid template. Adds these three nucleotides in the order of C, C, and A to the tRNA nucleotide-73, using CTP and ATP as substrates and producing inorganic pyrophosphate. tRNA 3'-terminal CCA addition is required both for tRNA processing and repair. Also involved in tRNA surveillance by mediating tandem CCA addition to generate a CCACCA at the 3' terminus of unstable tRNAs. While stable tRNAs receive only 3'-terminal CCA, unstable tRNAs are marked with CCACCA and rapidly degraded.</text>
</comment>
<comment type="catalytic activity">
    <reaction evidence="1">
        <text>a tRNA precursor + 2 CTP + ATP = a tRNA with a 3' CCA end + 3 diphosphate</text>
        <dbReference type="Rhea" id="RHEA:14433"/>
        <dbReference type="Rhea" id="RHEA-COMP:10465"/>
        <dbReference type="Rhea" id="RHEA-COMP:10468"/>
        <dbReference type="ChEBI" id="CHEBI:30616"/>
        <dbReference type="ChEBI" id="CHEBI:33019"/>
        <dbReference type="ChEBI" id="CHEBI:37563"/>
        <dbReference type="ChEBI" id="CHEBI:74896"/>
        <dbReference type="ChEBI" id="CHEBI:83071"/>
        <dbReference type="EC" id="2.7.7.72"/>
    </reaction>
</comment>
<comment type="catalytic activity">
    <reaction evidence="1">
        <text>a tRNA with a 3' CCA end + 2 CTP + ATP = a tRNA with a 3' CCACCA end + 3 diphosphate</text>
        <dbReference type="Rhea" id="RHEA:76235"/>
        <dbReference type="Rhea" id="RHEA-COMP:10468"/>
        <dbReference type="Rhea" id="RHEA-COMP:18655"/>
        <dbReference type="ChEBI" id="CHEBI:30616"/>
        <dbReference type="ChEBI" id="CHEBI:33019"/>
        <dbReference type="ChEBI" id="CHEBI:37563"/>
        <dbReference type="ChEBI" id="CHEBI:83071"/>
        <dbReference type="ChEBI" id="CHEBI:195187"/>
    </reaction>
    <physiologicalReaction direction="left-to-right" evidence="1">
        <dbReference type="Rhea" id="RHEA:76236"/>
    </physiologicalReaction>
</comment>
<comment type="cofactor">
    <cofactor evidence="1">
        <name>Mg(2+)</name>
        <dbReference type="ChEBI" id="CHEBI:18420"/>
    </cofactor>
    <text evidence="1">Magnesium is required for nucleotidyltransferase activity.</text>
</comment>
<comment type="cofactor">
    <cofactor evidence="1">
        <name>Ni(2+)</name>
        <dbReference type="ChEBI" id="CHEBI:49786"/>
    </cofactor>
    <text evidence="1">Nickel for phosphatase activity.</text>
</comment>
<comment type="subunit">
    <text evidence="1">Monomer. Can also form homodimers and oligomers.</text>
</comment>
<comment type="domain">
    <text evidence="1">Comprises two domains: an N-terminal domain containing the nucleotidyltransferase activity and a C-terminal HD domain associated with both phosphodiesterase and phosphatase activities.</text>
</comment>
<comment type="miscellaneous">
    <text evidence="1">A single active site specifically recognizes both ATP and CTP and is responsible for their addition.</text>
</comment>
<comment type="similarity">
    <text evidence="1">Belongs to the tRNA nucleotidyltransferase/poly(A) polymerase family. Bacterial CCA-adding enzyme type 1 subfamily.</text>
</comment>
<accession>Q9JUB2</accession>
<accession>A1IS26</accession>